<comment type="function">
    <text evidence="1">Pyrophosphatase that catalyzes the hydrolysis of nucleoside triphosphates to their monophosphate derivatives, with a high preference for the non-canonical purine nucleotides XTP (xanthosine triphosphate), dITP (deoxyinosine triphosphate) and ITP. Seems to function as a house-cleaning enzyme that removes non-canonical purine nucleotides from the nucleotide pool, thus preventing their incorporation into DNA/RNA and avoiding chromosomal lesions.</text>
</comment>
<comment type="catalytic activity">
    <reaction evidence="1">
        <text>XTP + H2O = XMP + diphosphate + H(+)</text>
        <dbReference type="Rhea" id="RHEA:28610"/>
        <dbReference type="ChEBI" id="CHEBI:15377"/>
        <dbReference type="ChEBI" id="CHEBI:15378"/>
        <dbReference type="ChEBI" id="CHEBI:33019"/>
        <dbReference type="ChEBI" id="CHEBI:57464"/>
        <dbReference type="ChEBI" id="CHEBI:61314"/>
        <dbReference type="EC" id="3.6.1.66"/>
    </reaction>
</comment>
<comment type="catalytic activity">
    <reaction evidence="1">
        <text>dITP + H2O = dIMP + diphosphate + H(+)</text>
        <dbReference type="Rhea" id="RHEA:28342"/>
        <dbReference type="ChEBI" id="CHEBI:15377"/>
        <dbReference type="ChEBI" id="CHEBI:15378"/>
        <dbReference type="ChEBI" id="CHEBI:33019"/>
        <dbReference type="ChEBI" id="CHEBI:61194"/>
        <dbReference type="ChEBI" id="CHEBI:61382"/>
        <dbReference type="EC" id="3.6.1.66"/>
    </reaction>
</comment>
<comment type="catalytic activity">
    <reaction evidence="1">
        <text>ITP + H2O = IMP + diphosphate + H(+)</text>
        <dbReference type="Rhea" id="RHEA:29399"/>
        <dbReference type="ChEBI" id="CHEBI:15377"/>
        <dbReference type="ChEBI" id="CHEBI:15378"/>
        <dbReference type="ChEBI" id="CHEBI:33019"/>
        <dbReference type="ChEBI" id="CHEBI:58053"/>
        <dbReference type="ChEBI" id="CHEBI:61402"/>
        <dbReference type="EC" id="3.6.1.66"/>
    </reaction>
</comment>
<comment type="cofactor">
    <cofactor evidence="1">
        <name>Mg(2+)</name>
        <dbReference type="ChEBI" id="CHEBI:18420"/>
    </cofactor>
    <text evidence="1">Binds 1 Mg(2+) ion per subunit.</text>
</comment>
<comment type="subunit">
    <text evidence="1">Homodimer.</text>
</comment>
<comment type="similarity">
    <text evidence="1">Belongs to the HAM1 NTPase family.</text>
</comment>
<feature type="chain" id="PRO_0000178147" description="dITP/XTP pyrophosphatase">
    <location>
        <begin position="1"/>
        <end position="194"/>
    </location>
</feature>
<feature type="active site" description="Proton acceptor" evidence="1">
    <location>
        <position position="69"/>
    </location>
</feature>
<feature type="binding site" evidence="1">
    <location>
        <begin position="9"/>
        <end position="14"/>
    </location>
    <ligand>
        <name>substrate</name>
    </ligand>
</feature>
<feature type="binding site" evidence="1">
    <location>
        <position position="40"/>
    </location>
    <ligand>
        <name>Mg(2+)</name>
        <dbReference type="ChEBI" id="CHEBI:18420"/>
    </ligand>
</feature>
<feature type="binding site" evidence="1">
    <location>
        <position position="69"/>
    </location>
    <ligand>
        <name>Mg(2+)</name>
        <dbReference type="ChEBI" id="CHEBI:18420"/>
    </ligand>
</feature>
<feature type="binding site" evidence="1">
    <location>
        <position position="70"/>
    </location>
    <ligand>
        <name>substrate</name>
    </ligand>
</feature>
<feature type="binding site" evidence="1">
    <location>
        <begin position="152"/>
        <end position="155"/>
    </location>
    <ligand>
        <name>substrate</name>
    </ligand>
</feature>
<feature type="binding site" evidence="1">
    <location>
        <position position="175"/>
    </location>
    <ligand>
        <name>substrate</name>
    </ligand>
</feature>
<feature type="binding site" evidence="1">
    <location>
        <begin position="180"/>
        <end position="181"/>
    </location>
    <ligand>
        <name>substrate</name>
    </ligand>
</feature>
<dbReference type="EC" id="3.6.1.66" evidence="1"/>
<dbReference type="EMBL" id="AE005673">
    <property type="protein sequence ID" value="AAK22133.1"/>
    <property type="molecule type" value="Genomic_DNA"/>
</dbReference>
<dbReference type="PIR" id="A87267">
    <property type="entry name" value="A87267"/>
</dbReference>
<dbReference type="RefSeq" id="NP_418965.1">
    <property type="nucleotide sequence ID" value="NC_002696.2"/>
</dbReference>
<dbReference type="SMR" id="Q9ABS4"/>
<dbReference type="STRING" id="190650.CC_0146"/>
<dbReference type="EnsemblBacteria" id="AAK22133">
    <property type="protein sequence ID" value="AAK22133"/>
    <property type="gene ID" value="CC_0146"/>
</dbReference>
<dbReference type="KEGG" id="ccr:CC_0146"/>
<dbReference type="PATRIC" id="fig|190650.5.peg.143"/>
<dbReference type="eggNOG" id="COG0127">
    <property type="taxonomic scope" value="Bacteria"/>
</dbReference>
<dbReference type="HOGENOM" id="CLU_082080_0_2_5"/>
<dbReference type="BioCyc" id="CAULO:CC0146-MONOMER"/>
<dbReference type="Proteomes" id="UP000001816">
    <property type="component" value="Chromosome"/>
</dbReference>
<dbReference type="GO" id="GO:0005829">
    <property type="term" value="C:cytosol"/>
    <property type="evidence" value="ECO:0007669"/>
    <property type="project" value="TreeGrafter"/>
</dbReference>
<dbReference type="GO" id="GO:0035870">
    <property type="term" value="F:dITP diphosphatase activity"/>
    <property type="evidence" value="ECO:0007669"/>
    <property type="project" value="RHEA"/>
</dbReference>
<dbReference type="GO" id="GO:0036220">
    <property type="term" value="F:ITP diphosphatase activity"/>
    <property type="evidence" value="ECO:0007669"/>
    <property type="project" value="UniProtKB-EC"/>
</dbReference>
<dbReference type="GO" id="GO:0046872">
    <property type="term" value="F:metal ion binding"/>
    <property type="evidence" value="ECO:0007669"/>
    <property type="project" value="UniProtKB-KW"/>
</dbReference>
<dbReference type="GO" id="GO:0000166">
    <property type="term" value="F:nucleotide binding"/>
    <property type="evidence" value="ECO:0007669"/>
    <property type="project" value="UniProtKB-KW"/>
</dbReference>
<dbReference type="GO" id="GO:0017111">
    <property type="term" value="F:ribonucleoside triphosphate phosphatase activity"/>
    <property type="evidence" value="ECO:0007669"/>
    <property type="project" value="InterPro"/>
</dbReference>
<dbReference type="GO" id="GO:0036222">
    <property type="term" value="F:XTP diphosphatase activity"/>
    <property type="evidence" value="ECO:0007669"/>
    <property type="project" value="RHEA"/>
</dbReference>
<dbReference type="GO" id="GO:0009117">
    <property type="term" value="P:nucleotide metabolic process"/>
    <property type="evidence" value="ECO:0007669"/>
    <property type="project" value="UniProtKB-KW"/>
</dbReference>
<dbReference type="GO" id="GO:0009146">
    <property type="term" value="P:purine nucleoside triphosphate catabolic process"/>
    <property type="evidence" value="ECO:0007669"/>
    <property type="project" value="UniProtKB-UniRule"/>
</dbReference>
<dbReference type="CDD" id="cd00515">
    <property type="entry name" value="HAM1"/>
    <property type="match status" value="1"/>
</dbReference>
<dbReference type="FunFam" id="3.90.950.10:FF:000001">
    <property type="entry name" value="dITP/XTP pyrophosphatase"/>
    <property type="match status" value="1"/>
</dbReference>
<dbReference type="Gene3D" id="3.90.950.10">
    <property type="match status" value="1"/>
</dbReference>
<dbReference type="HAMAP" id="MF_01405">
    <property type="entry name" value="Non_canon_purine_NTPase"/>
    <property type="match status" value="1"/>
</dbReference>
<dbReference type="InterPro" id="IPR020922">
    <property type="entry name" value="dITP/XTP_pyrophosphatase"/>
</dbReference>
<dbReference type="InterPro" id="IPR029001">
    <property type="entry name" value="ITPase-like_fam"/>
</dbReference>
<dbReference type="InterPro" id="IPR002637">
    <property type="entry name" value="RdgB/HAM1"/>
</dbReference>
<dbReference type="NCBIfam" id="TIGR00042">
    <property type="entry name" value="RdgB/HAM1 family non-canonical purine NTP pyrophosphatase"/>
    <property type="match status" value="1"/>
</dbReference>
<dbReference type="PANTHER" id="PTHR11067:SF9">
    <property type="entry name" value="INOSINE TRIPHOSPHATE PYROPHOSPHATASE"/>
    <property type="match status" value="1"/>
</dbReference>
<dbReference type="PANTHER" id="PTHR11067">
    <property type="entry name" value="INOSINE TRIPHOSPHATE PYROPHOSPHATASE/HAM1 PROTEIN"/>
    <property type="match status" value="1"/>
</dbReference>
<dbReference type="Pfam" id="PF01725">
    <property type="entry name" value="Ham1p_like"/>
    <property type="match status" value="1"/>
</dbReference>
<dbReference type="SUPFAM" id="SSF52972">
    <property type="entry name" value="ITPase-like"/>
    <property type="match status" value="1"/>
</dbReference>
<reference key="1">
    <citation type="journal article" date="2001" name="Proc. Natl. Acad. Sci. U.S.A.">
        <title>Complete genome sequence of Caulobacter crescentus.</title>
        <authorList>
            <person name="Nierman W.C."/>
            <person name="Feldblyum T.V."/>
            <person name="Laub M.T."/>
            <person name="Paulsen I.T."/>
            <person name="Nelson K.E."/>
            <person name="Eisen J.A."/>
            <person name="Heidelberg J.F."/>
            <person name="Alley M.R.K."/>
            <person name="Ohta N."/>
            <person name="Maddock J.R."/>
            <person name="Potocka I."/>
            <person name="Nelson W.C."/>
            <person name="Newton A."/>
            <person name="Stephens C."/>
            <person name="Phadke N.D."/>
            <person name="Ely B."/>
            <person name="DeBoy R.T."/>
            <person name="Dodson R.J."/>
            <person name="Durkin A.S."/>
            <person name="Gwinn M.L."/>
            <person name="Haft D.H."/>
            <person name="Kolonay J.F."/>
            <person name="Smit J."/>
            <person name="Craven M.B."/>
            <person name="Khouri H.M."/>
            <person name="Shetty J."/>
            <person name="Berry K.J."/>
            <person name="Utterback T.R."/>
            <person name="Tran K."/>
            <person name="Wolf A.M."/>
            <person name="Vamathevan J.J."/>
            <person name="Ermolaeva M.D."/>
            <person name="White O."/>
            <person name="Salzberg S.L."/>
            <person name="Venter J.C."/>
            <person name="Shapiro L."/>
            <person name="Fraser C.M."/>
        </authorList>
    </citation>
    <scope>NUCLEOTIDE SEQUENCE [LARGE SCALE GENOMIC DNA]</scope>
    <source>
        <strain>ATCC 19089 / CIP 103742 / CB 15</strain>
    </source>
</reference>
<accession>Q9ABS4</accession>
<protein>
    <recommendedName>
        <fullName evidence="1">dITP/XTP pyrophosphatase</fullName>
        <ecNumber evidence="1">3.6.1.66</ecNumber>
    </recommendedName>
    <alternativeName>
        <fullName evidence="1">Non-canonical purine NTP pyrophosphatase</fullName>
    </alternativeName>
    <alternativeName>
        <fullName evidence="1">Non-standard purine NTP pyrophosphatase</fullName>
    </alternativeName>
    <alternativeName>
        <fullName evidence="1">Nucleoside-triphosphate diphosphatase</fullName>
    </alternativeName>
    <alternativeName>
        <fullName evidence="1">Nucleoside-triphosphate pyrophosphatase</fullName>
        <shortName evidence="1">NTPase</shortName>
    </alternativeName>
</protein>
<gene>
    <name type="ordered locus">CC_0146</name>
</gene>
<sequence length="194" mass="20299">MGAKLVAATHNPGKVPEIAALLDGRFEIVTAGQLGLPEPDETESTFVGNALLKARHAADLSGLPALADDSGLSVTALDGAPGIFSARWAGPGKDFALAMKKVEERLEETASDDRTAWFTSALAVAWPNGPAVVVEGRVDGTLVFPGRGTRGFGYDPIFVPEGHALTFGEMEPAAKDAMSHRARAFAKLKAALFD</sequence>
<proteinExistence type="inferred from homology"/>
<name>IXTPA_CAUVC</name>
<evidence type="ECO:0000255" key="1">
    <source>
        <dbReference type="HAMAP-Rule" id="MF_01405"/>
    </source>
</evidence>
<keyword id="KW-0378">Hydrolase</keyword>
<keyword id="KW-0460">Magnesium</keyword>
<keyword id="KW-0479">Metal-binding</keyword>
<keyword id="KW-0546">Nucleotide metabolism</keyword>
<keyword id="KW-0547">Nucleotide-binding</keyword>
<keyword id="KW-1185">Reference proteome</keyword>
<organism>
    <name type="scientific">Caulobacter vibrioides (strain ATCC 19089 / CIP 103742 / CB 15)</name>
    <name type="common">Caulobacter crescentus</name>
    <dbReference type="NCBI Taxonomy" id="190650"/>
    <lineage>
        <taxon>Bacteria</taxon>
        <taxon>Pseudomonadati</taxon>
        <taxon>Pseudomonadota</taxon>
        <taxon>Alphaproteobacteria</taxon>
        <taxon>Caulobacterales</taxon>
        <taxon>Caulobacteraceae</taxon>
        <taxon>Caulobacter</taxon>
    </lineage>
</organism>